<protein>
    <recommendedName>
        <fullName evidence="1">Small ribosomal subunit protein uS10</fullName>
    </recommendedName>
    <alternativeName>
        <fullName evidence="2">30S ribosomal protein S10</fullName>
    </alternativeName>
</protein>
<gene>
    <name evidence="1" type="primary">rpsJ</name>
    <name type="ordered locus">BH10520</name>
</gene>
<proteinExistence type="inferred from homology"/>
<dbReference type="EMBL" id="BX897699">
    <property type="protein sequence ID" value="CAF27843.1"/>
    <property type="molecule type" value="Genomic_DNA"/>
</dbReference>
<dbReference type="RefSeq" id="WP_004855744.1">
    <property type="nucleotide sequence ID" value="NZ_LRIJ02000001.1"/>
</dbReference>
<dbReference type="SMR" id="Q6G2W4"/>
<dbReference type="PaxDb" id="283166-BH10520"/>
<dbReference type="EnsemblBacteria" id="CAF27843">
    <property type="protein sequence ID" value="CAF27843"/>
    <property type="gene ID" value="BH10520"/>
</dbReference>
<dbReference type="GeneID" id="92985262"/>
<dbReference type="KEGG" id="bhe:BH10520"/>
<dbReference type="eggNOG" id="COG0051">
    <property type="taxonomic scope" value="Bacteria"/>
</dbReference>
<dbReference type="OrthoDB" id="9804464at2"/>
<dbReference type="Proteomes" id="UP000000421">
    <property type="component" value="Chromosome"/>
</dbReference>
<dbReference type="GO" id="GO:1990904">
    <property type="term" value="C:ribonucleoprotein complex"/>
    <property type="evidence" value="ECO:0007669"/>
    <property type="project" value="UniProtKB-KW"/>
</dbReference>
<dbReference type="GO" id="GO:0005840">
    <property type="term" value="C:ribosome"/>
    <property type="evidence" value="ECO:0007669"/>
    <property type="project" value="UniProtKB-KW"/>
</dbReference>
<dbReference type="GO" id="GO:0003735">
    <property type="term" value="F:structural constituent of ribosome"/>
    <property type="evidence" value="ECO:0007669"/>
    <property type="project" value="InterPro"/>
</dbReference>
<dbReference type="GO" id="GO:0000049">
    <property type="term" value="F:tRNA binding"/>
    <property type="evidence" value="ECO:0007669"/>
    <property type="project" value="UniProtKB-UniRule"/>
</dbReference>
<dbReference type="GO" id="GO:0006412">
    <property type="term" value="P:translation"/>
    <property type="evidence" value="ECO:0007669"/>
    <property type="project" value="UniProtKB-UniRule"/>
</dbReference>
<dbReference type="FunFam" id="3.30.70.600:FF:000001">
    <property type="entry name" value="30S ribosomal protein S10"/>
    <property type="match status" value="1"/>
</dbReference>
<dbReference type="Gene3D" id="3.30.70.600">
    <property type="entry name" value="Ribosomal protein S10 domain"/>
    <property type="match status" value="1"/>
</dbReference>
<dbReference type="HAMAP" id="MF_00508">
    <property type="entry name" value="Ribosomal_uS10"/>
    <property type="match status" value="1"/>
</dbReference>
<dbReference type="InterPro" id="IPR001848">
    <property type="entry name" value="Ribosomal_uS10"/>
</dbReference>
<dbReference type="InterPro" id="IPR018268">
    <property type="entry name" value="Ribosomal_uS10_CS"/>
</dbReference>
<dbReference type="InterPro" id="IPR027486">
    <property type="entry name" value="Ribosomal_uS10_dom"/>
</dbReference>
<dbReference type="InterPro" id="IPR036838">
    <property type="entry name" value="Ribosomal_uS10_dom_sf"/>
</dbReference>
<dbReference type="NCBIfam" id="NF001861">
    <property type="entry name" value="PRK00596.1"/>
    <property type="match status" value="1"/>
</dbReference>
<dbReference type="NCBIfam" id="TIGR01049">
    <property type="entry name" value="rpsJ_bact"/>
    <property type="match status" value="1"/>
</dbReference>
<dbReference type="PANTHER" id="PTHR11700">
    <property type="entry name" value="30S RIBOSOMAL PROTEIN S10 FAMILY MEMBER"/>
    <property type="match status" value="1"/>
</dbReference>
<dbReference type="Pfam" id="PF00338">
    <property type="entry name" value="Ribosomal_S10"/>
    <property type="match status" value="1"/>
</dbReference>
<dbReference type="PRINTS" id="PR00971">
    <property type="entry name" value="RIBOSOMALS10"/>
</dbReference>
<dbReference type="SMART" id="SM01403">
    <property type="entry name" value="Ribosomal_S10"/>
    <property type="match status" value="1"/>
</dbReference>
<dbReference type="SUPFAM" id="SSF54999">
    <property type="entry name" value="Ribosomal protein S10"/>
    <property type="match status" value="1"/>
</dbReference>
<dbReference type="PROSITE" id="PS00361">
    <property type="entry name" value="RIBOSOMAL_S10"/>
    <property type="match status" value="1"/>
</dbReference>
<reference key="1">
    <citation type="journal article" date="2004" name="Proc. Natl. Acad. Sci. U.S.A.">
        <title>The louse-borne human pathogen Bartonella quintana is a genomic derivative of the zoonotic agent Bartonella henselae.</title>
        <authorList>
            <person name="Alsmark U.C.M."/>
            <person name="Frank A.C."/>
            <person name="Karlberg E.O."/>
            <person name="Legault B.-A."/>
            <person name="Ardell D.H."/>
            <person name="Canbaeck B."/>
            <person name="Eriksson A.-S."/>
            <person name="Naeslund A.K."/>
            <person name="Handley S.A."/>
            <person name="Huvet M."/>
            <person name="La Scola B."/>
            <person name="Holmberg M."/>
            <person name="Andersson S.G.E."/>
        </authorList>
    </citation>
    <scope>NUCLEOTIDE SEQUENCE [LARGE SCALE GENOMIC DNA]</scope>
    <source>
        <strain>ATCC 49882 / DSM 28221 / CCUG 30454 / Houston 1</strain>
    </source>
</reference>
<feature type="chain" id="PRO_0000146497" description="Small ribosomal subunit protein uS10">
    <location>
        <begin position="1"/>
        <end position="102"/>
    </location>
</feature>
<evidence type="ECO:0000255" key="1">
    <source>
        <dbReference type="HAMAP-Rule" id="MF_00508"/>
    </source>
</evidence>
<evidence type="ECO:0000305" key="2"/>
<organism>
    <name type="scientific">Bartonella henselae (strain ATCC 49882 / DSM 28221 / CCUG 30454 / Houston 1)</name>
    <name type="common">Rochalimaea henselae</name>
    <dbReference type="NCBI Taxonomy" id="283166"/>
    <lineage>
        <taxon>Bacteria</taxon>
        <taxon>Pseudomonadati</taxon>
        <taxon>Pseudomonadota</taxon>
        <taxon>Alphaproteobacteria</taxon>
        <taxon>Hyphomicrobiales</taxon>
        <taxon>Bartonellaceae</taxon>
        <taxon>Bartonella</taxon>
    </lineage>
</organism>
<keyword id="KW-0687">Ribonucleoprotein</keyword>
<keyword id="KW-0689">Ribosomal protein</keyword>
<sequence length="102" mass="11628">MNSQNIRIRLKAFDHRILDASTREIVSTAKRTGANVRGPIPLPTRIEKFTVNRGPHIDKKSREQFEMRTHKRLLDIVDPTPQTVDALMKLDLSAGVDVEIKL</sequence>
<name>RS10_BARHE</name>
<accession>Q6G2W4</accession>
<comment type="function">
    <text evidence="1">Involved in the binding of tRNA to the ribosomes.</text>
</comment>
<comment type="subunit">
    <text evidence="1">Part of the 30S ribosomal subunit.</text>
</comment>
<comment type="similarity">
    <text evidence="1">Belongs to the universal ribosomal protein uS10 family.</text>
</comment>